<feature type="chain" id="PRO_1000099863" description="Probable malate:quinone oxidoreductase">
    <location>
        <begin position="1"/>
        <end position="546"/>
    </location>
</feature>
<proteinExistence type="inferred from homology"/>
<protein>
    <recommendedName>
        <fullName evidence="1">Probable malate:quinone oxidoreductase</fullName>
        <ecNumber evidence="1">1.1.5.4</ecNumber>
    </recommendedName>
    <alternativeName>
        <fullName evidence="1">MQO</fullName>
    </alternativeName>
    <alternativeName>
        <fullName evidence="1">Malate dehydrogenase [quinone]</fullName>
    </alternativeName>
</protein>
<accession>B2HV78</accession>
<name>MQO_ACIBC</name>
<dbReference type="EC" id="1.1.5.4" evidence="1"/>
<dbReference type="EMBL" id="CP000863">
    <property type="protein sequence ID" value="ACC56199.1"/>
    <property type="molecule type" value="Genomic_DNA"/>
</dbReference>
<dbReference type="RefSeq" id="WP_000714073.1">
    <property type="nucleotide sequence ID" value="NZ_CP031380.1"/>
</dbReference>
<dbReference type="SMR" id="B2HV78"/>
<dbReference type="KEGG" id="abc:ACICU_00887"/>
<dbReference type="HOGENOM" id="CLU_028151_0_0_6"/>
<dbReference type="UniPathway" id="UPA00223">
    <property type="reaction ID" value="UER01008"/>
</dbReference>
<dbReference type="Proteomes" id="UP000008839">
    <property type="component" value="Chromosome"/>
</dbReference>
<dbReference type="GO" id="GO:0047545">
    <property type="term" value="F:2-hydroxyglutarate dehydrogenase activity"/>
    <property type="evidence" value="ECO:0007669"/>
    <property type="project" value="TreeGrafter"/>
</dbReference>
<dbReference type="GO" id="GO:0008924">
    <property type="term" value="F:L-malate dehydrogenase (quinone) activity"/>
    <property type="evidence" value="ECO:0007669"/>
    <property type="project" value="UniProtKB-UniRule"/>
</dbReference>
<dbReference type="GO" id="GO:0006099">
    <property type="term" value="P:tricarboxylic acid cycle"/>
    <property type="evidence" value="ECO:0007669"/>
    <property type="project" value="UniProtKB-UniRule"/>
</dbReference>
<dbReference type="HAMAP" id="MF_00212">
    <property type="entry name" value="MQO"/>
    <property type="match status" value="1"/>
</dbReference>
<dbReference type="InterPro" id="IPR036188">
    <property type="entry name" value="FAD/NAD-bd_sf"/>
</dbReference>
<dbReference type="InterPro" id="IPR006231">
    <property type="entry name" value="MQO"/>
</dbReference>
<dbReference type="NCBIfam" id="TIGR01320">
    <property type="entry name" value="mal_quin_oxido"/>
    <property type="match status" value="1"/>
</dbReference>
<dbReference type="NCBIfam" id="NF003603">
    <property type="entry name" value="PRK05257.1-1"/>
    <property type="match status" value="1"/>
</dbReference>
<dbReference type="NCBIfam" id="NF003605">
    <property type="entry name" value="PRK05257.1-4"/>
    <property type="match status" value="1"/>
</dbReference>
<dbReference type="NCBIfam" id="NF003606">
    <property type="entry name" value="PRK05257.2-1"/>
    <property type="match status" value="1"/>
</dbReference>
<dbReference type="NCBIfam" id="NF003611">
    <property type="entry name" value="PRK05257.3-2"/>
    <property type="match status" value="1"/>
</dbReference>
<dbReference type="NCBIfam" id="NF009875">
    <property type="entry name" value="PRK13339.1"/>
    <property type="match status" value="1"/>
</dbReference>
<dbReference type="PANTHER" id="PTHR43104">
    <property type="entry name" value="L-2-HYDROXYGLUTARATE DEHYDROGENASE, MITOCHONDRIAL"/>
    <property type="match status" value="1"/>
</dbReference>
<dbReference type="PANTHER" id="PTHR43104:SF2">
    <property type="entry name" value="L-2-HYDROXYGLUTARATE DEHYDROGENASE, MITOCHONDRIAL"/>
    <property type="match status" value="1"/>
</dbReference>
<dbReference type="Pfam" id="PF06039">
    <property type="entry name" value="Mqo"/>
    <property type="match status" value="1"/>
</dbReference>
<dbReference type="SUPFAM" id="SSF51905">
    <property type="entry name" value="FAD/NAD(P)-binding domain"/>
    <property type="match status" value="1"/>
</dbReference>
<evidence type="ECO:0000255" key="1">
    <source>
        <dbReference type="HAMAP-Rule" id="MF_00212"/>
    </source>
</evidence>
<organism>
    <name type="scientific">Acinetobacter baumannii (strain ACICU)</name>
    <dbReference type="NCBI Taxonomy" id="405416"/>
    <lineage>
        <taxon>Bacteria</taxon>
        <taxon>Pseudomonadati</taxon>
        <taxon>Pseudomonadota</taxon>
        <taxon>Gammaproteobacteria</taxon>
        <taxon>Moraxellales</taxon>
        <taxon>Moraxellaceae</taxon>
        <taxon>Acinetobacter</taxon>
        <taxon>Acinetobacter calcoaceticus/baumannii complex</taxon>
    </lineage>
</organism>
<reference key="1">
    <citation type="journal article" date="2008" name="Antimicrob. Agents Chemother.">
        <title>Whole-genome pyrosequencing of an epidemic multidrug-resistant Acinetobacter baumannii strain belonging to the European clone II group.</title>
        <authorList>
            <person name="Iacono M."/>
            <person name="Villa L."/>
            <person name="Fortini D."/>
            <person name="Bordoni R."/>
            <person name="Imperi F."/>
            <person name="Bonnal R.J."/>
            <person name="Sicheritz-Ponten T."/>
            <person name="De Bellis G."/>
            <person name="Visca P."/>
            <person name="Cassone A."/>
            <person name="Carattoli A."/>
        </authorList>
    </citation>
    <scope>NUCLEOTIDE SEQUENCE [LARGE SCALE GENOMIC DNA]</scope>
    <source>
        <strain>ACICU</strain>
    </source>
</reference>
<sequence length="546" mass="60435">MKKFLKYLLVLIILILIAGIVFLFRPIASKQVQTAKDEPVVDAVLVGGGIMSATLGTYFTELEPNWQIRMFERLDQVAQESSNGFNNAGTGHSGFMEMNYTEEKNGKMEIAKAEKVASQFEVAKQFWSYQVKQGVLAEPKTFINPVPHIAFVWGDNVKFLEKRYAAMIQSPLFKGMKFTEDPAVIKQWAPLVMTDRDPTQKVAATRMEVGSDVNYGSITKQLVNHLNQNPNFKLQTSTEVTGISQNDDKTWTVSFKNLKTGKTDHVKTRFVFIGAGGAAVKLLQLTGLPEAKQYAGFPVGGEFLITDNPAITAQHTAKVYGRAELGAPPMSVPHIDTRYIDGKKYVLFGPFATYSNKFLKNGSQLDLLASTNKSNVLPMTTVGLENLDLVKYLVSQVMMSDEDRLNELRKYYPDAKAEDWRLSQGGQRVQIIKKEPGKPATLQFGTEIFASKDGAVTALLGASPGASTSPYIMLNLLEKAFPQQTEGKWNQKLHEIVVSYKQDLSKDPVLLDKVRQYTSSTLGLNYTSPFKAANDETAAAPVAKAN</sequence>
<gene>
    <name evidence="1" type="primary">mqo</name>
    <name type="ordered locus">ACICU_00887</name>
</gene>
<keyword id="KW-0274">FAD</keyword>
<keyword id="KW-0285">Flavoprotein</keyword>
<keyword id="KW-0560">Oxidoreductase</keyword>
<keyword id="KW-0816">Tricarboxylic acid cycle</keyword>
<comment type="catalytic activity">
    <reaction evidence="1">
        <text>(S)-malate + a quinone = a quinol + oxaloacetate</text>
        <dbReference type="Rhea" id="RHEA:46012"/>
        <dbReference type="ChEBI" id="CHEBI:15589"/>
        <dbReference type="ChEBI" id="CHEBI:16452"/>
        <dbReference type="ChEBI" id="CHEBI:24646"/>
        <dbReference type="ChEBI" id="CHEBI:132124"/>
        <dbReference type="EC" id="1.1.5.4"/>
    </reaction>
</comment>
<comment type="cofactor">
    <cofactor evidence="1">
        <name>FAD</name>
        <dbReference type="ChEBI" id="CHEBI:57692"/>
    </cofactor>
</comment>
<comment type="pathway">
    <text evidence="1">Carbohydrate metabolism; tricarboxylic acid cycle; oxaloacetate from (S)-malate (quinone route): step 1/1.</text>
</comment>
<comment type="similarity">
    <text evidence="1">Belongs to the MQO family.</text>
</comment>